<feature type="chain" id="PRO_0000231148" description="UDP-N-acetylglucosamine 1-carboxyvinyltransferase">
    <location>
        <begin position="1"/>
        <end position="418"/>
    </location>
</feature>
<feature type="active site" description="Proton donor" evidence="1">
    <location>
        <position position="116"/>
    </location>
</feature>
<feature type="binding site" evidence="1">
    <location>
        <begin position="22"/>
        <end position="23"/>
    </location>
    <ligand>
        <name>phosphoenolpyruvate</name>
        <dbReference type="ChEBI" id="CHEBI:58702"/>
    </ligand>
</feature>
<feature type="binding site" evidence="1">
    <location>
        <position position="92"/>
    </location>
    <ligand>
        <name>UDP-N-acetyl-alpha-D-glucosamine</name>
        <dbReference type="ChEBI" id="CHEBI:57705"/>
    </ligand>
</feature>
<feature type="binding site" evidence="1">
    <location>
        <begin position="121"/>
        <end position="125"/>
    </location>
    <ligand>
        <name>UDP-N-acetyl-alpha-D-glucosamine</name>
        <dbReference type="ChEBI" id="CHEBI:57705"/>
    </ligand>
</feature>
<feature type="binding site" evidence="1">
    <location>
        <position position="306"/>
    </location>
    <ligand>
        <name>UDP-N-acetyl-alpha-D-glucosamine</name>
        <dbReference type="ChEBI" id="CHEBI:57705"/>
    </ligand>
</feature>
<feature type="binding site" evidence="1">
    <location>
        <position position="328"/>
    </location>
    <ligand>
        <name>UDP-N-acetyl-alpha-D-glucosamine</name>
        <dbReference type="ChEBI" id="CHEBI:57705"/>
    </ligand>
</feature>
<feature type="modified residue" description="2-(S-cysteinyl)pyruvic acid O-phosphothioketal" evidence="1">
    <location>
        <position position="116"/>
    </location>
</feature>
<evidence type="ECO:0000255" key="1">
    <source>
        <dbReference type="HAMAP-Rule" id="MF_00111"/>
    </source>
</evidence>
<organism>
    <name type="scientific">Acinetobacter baylyi (strain ATCC 33305 / BD413 / ADP1)</name>
    <dbReference type="NCBI Taxonomy" id="62977"/>
    <lineage>
        <taxon>Bacteria</taxon>
        <taxon>Pseudomonadati</taxon>
        <taxon>Pseudomonadota</taxon>
        <taxon>Gammaproteobacteria</taxon>
        <taxon>Moraxellales</taxon>
        <taxon>Moraxellaceae</taxon>
        <taxon>Acinetobacter</taxon>
    </lineage>
</organism>
<proteinExistence type="inferred from homology"/>
<comment type="function">
    <text evidence="1">Cell wall formation. Adds enolpyruvyl to UDP-N-acetylglucosamine.</text>
</comment>
<comment type="catalytic activity">
    <reaction evidence="1">
        <text>phosphoenolpyruvate + UDP-N-acetyl-alpha-D-glucosamine = UDP-N-acetyl-3-O-(1-carboxyvinyl)-alpha-D-glucosamine + phosphate</text>
        <dbReference type="Rhea" id="RHEA:18681"/>
        <dbReference type="ChEBI" id="CHEBI:43474"/>
        <dbReference type="ChEBI" id="CHEBI:57705"/>
        <dbReference type="ChEBI" id="CHEBI:58702"/>
        <dbReference type="ChEBI" id="CHEBI:68483"/>
        <dbReference type="EC" id="2.5.1.7"/>
    </reaction>
</comment>
<comment type="pathway">
    <text evidence="1">Cell wall biogenesis; peptidoglycan biosynthesis.</text>
</comment>
<comment type="subcellular location">
    <subcellularLocation>
        <location evidence="1">Cytoplasm</location>
    </subcellularLocation>
</comment>
<comment type="similarity">
    <text evidence="1">Belongs to the EPSP synthase family. MurA subfamily.</text>
</comment>
<reference key="1">
    <citation type="journal article" date="2004" name="Nucleic Acids Res.">
        <title>Unique features revealed by the genome sequence of Acinetobacter sp. ADP1, a versatile and naturally transformation competent bacterium.</title>
        <authorList>
            <person name="Barbe V."/>
            <person name="Vallenet D."/>
            <person name="Fonknechten N."/>
            <person name="Kreimeyer A."/>
            <person name="Oztas S."/>
            <person name="Labarre L."/>
            <person name="Cruveiller S."/>
            <person name="Robert C."/>
            <person name="Duprat S."/>
            <person name="Wincker P."/>
            <person name="Ornston L.N."/>
            <person name="Weissenbach J."/>
            <person name="Marliere P."/>
            <person name="Cohen G.N."/>
            <person name="Medigue C."/>
        </authorList>
    </citation>
    <scope>NUCLEOTIDE SEQUENCE [LARGE SCALE GENOMIC DNA]</scope>
    <source>
        <strain>ATCC 33305 / BD413 / ADP1</strain>
    </source>
</reference>
<keyword id="KW-0131">Cell cycle</keyword>
<keyword id="KW-0132">Cell division</keyword>
<keyword id="KW-0133">Cell shape</keyword>
<keyword id="KW-0961">Cell wall biogenesis/degradation</keyword>
<keyword id="KW-0963">Cytoplasm</keyword>
<keyword id="KW-0573">Peptidoglycan synthesis</keyword>
<keyword id="KW-0670">Pyruvate</keyword>
<keyword id="KW-0808">Transferase</keyword>
<sequence length="418" mass="44759">MDKFLITGGVKLEGEVRISGAKNAALPLLAAMILADSPITLNNVPNLKDVNTLVKLIAGLGITMDYEGETVKADTSTLSNQFAPYELVKTMRASILVLGPLLARYGNAQVSLPGGCAIGSRPVDQHLKALEALGAHIEVENGYVHATVDGRLKGADITFDMVTVGGTENILMAAVLAEGTTTIRNAAREPEITDLAQMLIEMGAKIEGLDTDTLVVTGVESLHGCEYSVVADRIETGSYLAAAAITGGRVKTTHTDPSLLESVLDKFEEMGAEVTRGEDWIELDMMGKRPKAVSFRTLPHPEFPTDMQAQLMAVNVIGRGFATISETIFENRFMHVPELSRMGANIQVEGNDAIVTGVEKLQAAPVMATDLRASFSLVLAALVAEGDTLIDRIYHIDRGYENIEAKLQSLGAKIKRVS</sequence>
<gene>
    <name evidence="1" type="primary">murA</name>
    <name type="ordered locus">ACIAD0660</name>
</gene>
<accession>Q6FED0</accession>
<name>MURA_ACIAD</name>
<protein>
    <recommendedName>
        <fullName evidence="1">UDP-N-acetylglucosamine 1-carboxyvinyltransferase</fullName>
        <ecNumber evidence="1">2.5.1.7</ecNumber>
    </recommendedName>
    <alternativeName>
        <fullName evidence="1">Enoylpyruvate transferase</fullName>
    </alternativeName>
    <alternativeName>
        <fullName evidence="1">UDP-N-acetylglucosamine enolpyruvyl transferase</fullName>
        <shortName evidence="1">EPT</shortName>
    </alternativeName>
</protein>
<dbReference type="EC" id="2.5.1.7" evidence="1"/>
<dbReference type="EMBL" id="CR543861">
    <property type="protein sequence ID" value="CAG67578.1"/>
    <property type="molecule type" value="Genomic_DNA"/>
</dbReference>
<dbReference type="RefSeq" id="WP_004922701.1">
    <property type="nucleotide sequence ID" value="NC_005966.1"/>
</dbReference>
<dbReference type="SMR" id="Q6FED0"/>
<dbReference type="STRING" id="202950.GCA_001485005_02429"/>
<dbReference type="GeneID" id="45233139"/>
<dbReference type="KEGG" id="aci:ACIAD0660"/>
<dbReference type="eggNOG" id="COG0766">
    <property type="taxonomic scope" value="Bacteria"/>
</dbReference>
<dbReference type="HOGENOM" id="CLU_027387_0_0_6"/>
<dbReference type="OrthoDB" id="9803760at2"/>
<dbReference type="BioCyc" id="ASP62977:ACIAD_RS03055-MONOMER"/>
<dbReference type="UniPathway" id="UPA00219"/>
<dbReference type="Proteomes" id="UP000000430">
    <property type="component" value="Chromosome"/>
</dbReference>
<dbReference type="GO" id="GO:0005737">
    <property type="term" value="C:cytoplasm"/>
    <property type="evidence" value="ECO:0007669"/>
    <property type="project" value="UniProtKB-SubCell"/>
</dbReference>
<dbReference type="GO" id="GO:0008760">
    <property type="term" value="F:UDP-N-acetylglucosamine 1-carboxyvinyltransferase activity"/>
    <property type="evidence" value="ECO:0007669"/>
    <property type="project" value="UniProtKB-UniRule"/>
</dbReference>
<dbReference type="GO" id="GO:0051301">
    <property type="term" value="P:cell division"/>
    <property type="evidence" value="ECO:0007669"/>
    <property type="project" value="UniProtKB-KW"/>
</dbReference>
<dbReference type="GO" id="GO:0071555">
    <property type="term" value="P:cell wall organization"/>
    <property type="evidence" value="ECO:0007669"/>
    <property type="project" value="UniProtKB-KW"/>
</dbReference>
<dbReference type="GO" id="GO:0009252">
    <property type="term" value="P:peptidoglycan biosynthetic process"/>
    <property type="evidence" value="ECO:0007669"/>
    <property type="project" value="UniProtKB-UniRule"/>
</dbReference>
<dbReference type="GO" id="GO:0008360">
    <property type="term" value="P:regulation of cell shape"/>
    <property type="evidence" value="ECO:0007669"/>
    <property type="project" value="UniProtKB-KW"/>
</dbReference>
<dbReference type="GO" id="GO:0019277">
    <property type="term" value="P:UDP-N-acetylgalactosamine biosynthetic process"/>
    <property type="evidence" value="ECO:0007669"/>
    <property type="project" value="InterPro"/>
</dbReference>
<dbReference type="CDD" id="cd01555">
    <property type="entry name" value="UdpNAET"/>
    <property type="match status" value="1"/>
</dbReference>
<dbReference type="FunFam" id="3.65.10.10:FF:000001">
    <property type="entry name" value="UDP-N-acetylglucosamine 1-carboxyvinyltransferase"/>
    <property type="match status" value="1"/>
</dbReference>
<dbReference type="FunFam" id="3.65.10.10:FF:000002">
    <property type="entry name" value="UDP-N-acetylglucosamine 1-carboxyvinyltransferase"/>
    <property type="match status" value="1"/>
</dbReference>
<dbReference type="Gene3D" id="3.65.10.10">
    <property type="entry name" value="Enolpyruvate transferase domain"/>
    <property type="match status" value="2"/>
</dbReference>
<dbReference type="HAMAP" id="MF_00111">
    <property type="entry name" value="MurA"/>
    <property type="match status" value="1"/>
</dbReference>
<dbReference type="InterPro" id="IPR002110">
    <property type="entry name" value="Ankyrin_rpt"/>
</dbReference>
<dbReference type="InterPro" id="IPR001986">
    <property type="entry name" value="Enolpyruvate_Tfrase_dom"/>
</dbReference>
<dbReference type="InterPro" id="IPR036968">
    <property type="entry name" value="Enolpyruvate_Tfrase_sf"/>
</dbReference>
<dbReference type="InterPro" id="IPR050068">
    <property type="entry name" value="MurA_subfamily"/>
</dbReference>
<dbReference type="InterPro" id="IPR013792">
    <property type="entry name" value="RNA3'P_cycl/enolpyr_Trfase_a/b"/>
</dbReference>
<dbReference type="InterPro" id="IPR005750">
    <property type="entry name" value="UDP_GlcNAc_COvinyl_MurA"/>
</dbReference>
<dbReference type="NCBIfam" id="TIGR01072">
    <property type="entry name" value="murA"/>
    <property type="match status" value="1"/>
</dbReference>
<dbReference type="NCBIfam" id="NF006873">
    <property type="entry name" value="PRK09369.1"/>
    <property type="match status" value="1"/>
</dbReference>
<dbReference type="PANTHER" id="PTHR43783">
    <property type="entry name" value="UDP-N-ACETYLGLUCOSAMINE 1-CARBOXYVINYLTRANSFERASE"/>
    <property type="match status" value="1"/>
</dbReference>
<dbReference type="PANTHER" id="PTHR43783:SF1">
    <property type="entry name" value="UDP-N-ACETYLGLUCOSAMINE 1-CARBOXYVINYLTRANSFERASE"/>
    <property type="match status" value="1"/>
</dbReference>
<dbReference type="Pfam" id="PF00275">
    <property type="entry name" value="EPSP_synthase"/>
    <property type="match status" value="1"/>
</dbReference>
<dbReference type="SUPFAM" id="SSF55205">
    <property type="entry name" value="EPT/RTPC-like"/>
    <property type="match status" value="1"/>
</dbReference>